<organism>
    <name type="scientific">Caulobacter vibrioides (strain ATCC 19089 / CIP 103742 / CB 15)</name>
    <name type="common">Caulobacter crescentus</name>
    <dbReference type="NCBI Taxonomy" id="190650"/>
    <lineage>
        <taxon>Bacteria</taxon>
        <taxon>Pseudomonadati</taxon>
        <taxon>Pseudomonadota</taxon>
        <taxon>Alphaproteobacteria</taxon>
        <taxon>Caulobacterales</taxon>
        <taxon>Caulobacteraceae</taxon>
        <taxon>Caulobacter</taxon>
    </lineage>
</organism>
<protein>
    <recommendedName>
        <fullName evidence="1">UvrABC system protein C</fullName>
        <shortName evidence="1">Protein UvrC</shortName>
    </recommendedName>
    <alternativeName>
        <fullName evidence="1">Excinuclease ABC subunit C</fullName>
    </alternativeName>
</protein>
<name>UVRC_CAUVC</name>
<evidence type="ECO:0000255" key="1">
    <source>
        <dbReference type="HAMAP-Rule" id="MF_00203"/>
    </source>
</evidence>
<reference key="1">
    <citation type="journal article" date="2001" name="Proc. Natl. Acad. Sci. U.S.A.">
        <title>Complete genome sequence of Caulobacter crescentus.</title>
        <authorList>
            <person name="Nierman W.C."/>
            <person name="Feldblyum T.V."/>
            <person name="Laub M.T."/>
            <person name="Paulsen I.T."/>
            <person name="Nelson K.E."/>
            <person name="Eisen J.A."/>
            <person name="Heidelberg J.F."/>
            <person name="Alley M.R.K."/>
            <person name="Ohta N."/>
            <person name="Maddock J.R."/>
            <person name="Potocka I."/>
            <person name="Nelson W.C."/>
            <person name="Newton A."/>
            <person name="Stephens C."/>
            <person name="Phadke N.D."/>
            <person name="Ely B."/>
            <person name="DeBoy R.T."/>
            <person name="Dodson R.J."/>
            <person name="Durkin A.S."/>
            <person name="Gwinn M.L."/>
            <person name="Haft D.H."/>
            <person name="Kolonay J.F."/>
            <person name="Smit J."/>
            <person name="Craven M.B."/>
            <person name="Khouri H.M."/>
            <person name="Shetty J."/>
            <person name="Berry K.J."/>
            <person name="Utterback T.R."/>
            <person name="Tran K."/>
            <person name="Wolf A.M."/>
            <person name="Vamathevan J.J."/>
            <person name="Ermolaeva M.D."/>
            <person name="White O."/>
            <person name="Salzberg S.L."/>
            <person name="Venter J.C."/>
            <person name="Shapiro L."/>
            <person name="Fraser C.M."/>
        </authorList>
    </citation>
    <scope>NUCLEOTIDE SEQUENCE [LARGE SCALE GENOMIC DNA]</scope>
    <source>
        <strain>ATCC 19089 / CIP 103742 / CB 15</strain>
    </source>
</reference>
<sequence>MTDTPSASDAEAPLRQAAPLWGAALIKDEVTRLPDAPGVYRMIGEADEVLYVGKAKSLKKRVVQYAQGRFHTNRIANMVDATRAMEFITTRTEADALLLEINLIKQLKPRFNVLLRDDKSFPEIVIRRDHDAPQLRKHRGAHTIKGDYFGPFASAWAVNRTLNTLQKAFLLRSCSDSVYDSRDRPCMLYQIKRCAAPCTGLIGKDDYQALVDQAEAFLRGKSRAVMATMAKAMEEAAEELEFERAARLRDRIRALSAVAQETQINPETVEEADVVALHVEGGQACVQVFFFRAGQNWGNRAYFPRITGAADDPEDETVTEEQRIITAFLGQFYDDKPIPRLILANVQPAESELLSEAFALKSGRKVEIAVPKRGEKADLVQHVLTNAREALGRKMAEGSAQTKLLAGVAEAFKLDAPPERIEVYDNSHIQGANAVGGMIVAGPEGFMKGQYRKFNIKSTELTPGDDYGMMKEVLRRRFARLVKEEEEGDDANRPDLVLVDGGQGQLDAAIEIMADLGVDDIAVVGVAKGPDRDAGLERFFIPGQTPFMLEPKSPVLYYLQRLRDEAHRFAIGAHRTRRSMDLKKNPLDEIEGVGPGRKKALLHAFGSAKGVGRASVEDLVKVDGVSQALAERIFGFFRKG</sequence>
<feature type="chain" id="PRO_0000227411" description="UvrABC system protein C">
    <location>
        <begin position="1"/>
        <end position="640"/>
    </location>
</feature>
<feature type="domain" description="GIY-YIG" evidence="1">
    <location>
        <begin position="35"/>
        <end position="113"/>
    </location>
</feature>
<feature type="domain" description="UVR" evidence="1">
    <location>
        <begin position="223"/>
        <end position="258"/>
    </location>
</feature>
<accession>Q9A4F3</accession>
<proteinExistence type="inferred from homology"/>
<gene>
    <name evidence="1" type="primary">uvrC</name>
    <name type="ordered locus">CC_2881</name>
</gene>
<comment type="function">
    <text evidence="1">The UvrABC repair system catalyzes the recognition and processing of DNA lesions. UvrC both incises the 5' and 3' sides of the lesion. The N-terminal half is responsible for the 3' incision and the C-terminal half is responsible for the 5' incision.</text>
</comment>
<comment type="subunit">
    <text evidence="1">Interacts with UvrB in an incision complex.</text>
</comment>
<comment type="subcellular location">
    <subcellularLocation>
        <location evidence="1">Cytoplasm</location>
    </subcellularLocation>
</comment>
<comment type="similarity">
    <text evidence="1">Belongs to the UvrC family.</text>
</comment>
<dbReference type="EMBL" id="AE005673">
    <property type="protein sequence ID" value="AAK24845.1"/>
    <property type="molecule type" value="Genomic_DNA"/>
</dbReference>
<dbReference type="PIR" id="A87606">
    <property type="entry name" value="A87606"/>
</dbReference>
<dbReference type="RefSeq" id="NP_421677.1">
    <property type="nucleotide sequence ID" value="NC_002696.2"/>
</dbReference>
<dbReference type="RefSeq" id="WP_010920721.1">
    <property type="nucleotide sequence ID" value="NC_002696.2"/>
</dbReference>
<dbReference type="SMR" id="Q9A4F3"/>
<dbReference type="STRING" id="190650.CC_2881"/>
<dbReference type="EnsemblBacteria" id="AAK24845">
    <property type="protein sequence ID" value="AAK24845"/>
    <property type="gene ID" value="CC_2881"/>
</dbReference>
<dbReference type="KEGG" id="ccr:CC_2881"/>
<dbReference type="PATRIC" id="fig|190650.5.peg.2885"/>
<dbReference type="eggNOG" id="COG0322">
    <property type="taxonomic scope" value="Bacteria"/>
</dbReference>
<dbReference type="HOGENOM" id="CLU_014841_3_0_5"/>
<dbReference type="BioCyc" id="CAULO:CC2881-MONOMER"/>
<dbReference type="Proteomes" id="UP000001816">
    <property type="component" value="Chromosome"/>
</dbReference>
<dbReference type="GO" id="GO:0005737">
    <property type="term" value="C:cytoplasm"/>
    <property type="evidence" value="ECO:0007669"/>
    <property type="project" value="UniProtKB-SubCell"/>
</dbReference>
<dbReference type="GO" id="GO:0009380">
    <property type="term" value="C:excinuclease repair complex"/>
    <property type="evidence" value="ECO:0007669"/>
    <property type="project" value="InterPro"/>
</dbReference>
<dbReference type="GO" id="GO:0003677">
    <property type="term" value="F:DNA binding"/>
    <property type="evidence" value="ECO:0007669"/>
    <property type="project" value="UniProtKB-UniRule"/>
</dbReference>
<dbReference type="GO" id="GO:0009381">
    <property type="term" value="F:excinuclease ABC activity"/>
    <property type="evidence" value="ECO:0007669"/>
    <property type="project" value="UniProtKB-UniRule"/>
</dbReference>
<dbReference type="GO" id="GO:0006289">
    <property type="term" value="P:nucleotide-excision repair"/>
    <property type="evidence" value="ECO:0007669"/>
    <property type="project" value="UniProtKB-UniRule"/>
</dbReference>
<dbReference type="GO" id="GO:0009432">
    <property type="term" value="P:SOS response"/>
    <property type="evidence" value="ECO:0000269"/>
    <property type="project" value="CollecTF"/>
</dbReference>
<dbReference type="CDD" id="cd10434">
    <property type="entry name" value="GIY-YIG_UvrC_Cho"/>
    <property type="match status" value="1"/>
</dbReference>
<dbReference type="FunFam" id="3.30.420.340:FF:000001">
    <property type="entry name" value="UvrABC system protein C"/>
    <property type="match status" value="1"/>
</dbReference>
<dbReference type="FunFam" id="3.40.1440.10:FF:000001">
    <property type="entry name" value="UvrABC system protein C"/>
    <property type="match status" value="1"/>
</dbReference>
<dbReference type="Gene3D" id="1.10.150.20">
    <property type="entry name" value="5' to 3' exonuclease, C-terminal subdomain"/>
    <property type="match status" value="1"/>
</dbReference>
<dbReference type="Gene3D" id="3.40.1440.10">
    <property type="entry name" value="GIY-YIG endonuclease"/>
    <property type="match status" value="1"/>
</dbReference>
<dbReference type="Gene3D" id="4.10.860.10">
    <property type="entry name" value="UVR domain"/>
    <property type="match status" value="1"/>
</dbReference>
<dbReference type="Gene3D" id="3.30.420.340">
    <property type="entry name" value="UvrC, RNAse H endonuclease domain"/>
    <property type="match status" value="1"/>
</dbReference>
<dbReference type="HAMAP" id="MF_00203">
    <property type="entry name" value="UvrC"/>
    <property type="match status" value="1"/>
</dbReference>
<dbReference type="InterPro" id="IPR000305">
    <property type="entry name" value="GIY-YIG_endonuc"/>
</dbReference>
<dbReference type="InterPro" id="IPR035901">
    <property type="entry name" value="GIY-YIG_endonuc_sf"/>
</dbReference>
<dbReference type="InterPro" id="IPR047296">
    <property type="entry name" value="GIY-YIG_UvrC_Cho"/>
</dbReference>
<dbReference type="InterPro" id="IPR003583">
    <property type="entry name" value="Hlx-hairpin-Hlx_DNA-bd_motif"/>
</dbReference>
<dbReference type="InterPro" id="IPR010994">
    <property type="entry name" value="RuvA_2-like"/>
</dbReference>
<dbReference type="InterPro" id="IPR001943">
    <property type="entry name" value="UVR_dom"/>
</dbReference>
<dbReference type="InterPro" id="IPR036876">
    <property type="entry name" value="UVR_dom_sf"/>
</dbReference>
<dbReference type="InterPro" id="IPR050066">
    <property type="entry name" value="UvrABC_protein_C"/>
</dbReference>
<dbReference type="InterPro" id="IPR004791">
    <property type="entry name" value="UvrC"/>
</dbReference>
<dbReference type="InterPro" id="IPR001162">
    <property type="entry name" value="UvrC_RNase_H_dom"/>
</dbReference>
<dbReference type="InterPro" id="IPR038476">
    <property type="entry name" value="UvrC_RNase_H_dom_sf"/>
</dbReference>
<dbReference type="NCBIfam" id="NF001824">
    <property type="entry name" value="PRK00558.1-5"/>
    <property type="match status" value="1"/>
</dbReference>
<dbReference type="NCBIfam" id="TIGR00194">
    <property type="entry name" value="uvrC"/>
    <property type="match status" value="1"/>
</dbReference>
<dbReference type="PANTHER" id="PTHR30562:SF1">
    <property type="entry name" value="UVRABC SYSTEM PROTEIN C"/>
    <property type="match status" value="1"/>
</dbReference>
<dbReference type="PANTHER" id="PTHR30562">
    <property type="entry name" value="UVRC/OXIDOREDUCTASE"/>
    <property type="match status" value="1"/>
</dbReference>
<dbReference type="Pfam" id="PF01541">
    <property type="entry name" value="GIY-YIG"/>
    <property type="match status" value="1"/>
</dbReference>
<dbReference type="Pfam" id="PF14520">
    <property type="entry name" value="HHH_5"/>
    <property type="match status" value="1"/>
</dbReference>
<dbReference type="Pfam" id="PF02151">
    <property type="entry name" value="UVR"/>
    <property type="match status" value="1"/>
</dbReference>
<dbReference type="Pfam" id="PF22920">
    <property type="entry name" value="UvrC_RNaseH"/>
    <property type="match status" value="1"/>
</dbReference>
<dbReference type="Pfam" id="PF08459">
    <property type="entry name" value="UvrC_RNaseH_dom"/>
    <property type="match status" value="1"/>
</dbReference>
<dbReference type="SMART" id="SM00465">
    <property type="entry name" value="GIYc"/>
    <property type="match status" value="1"/>
</dbReference>
<dbReference type="SMART" id="SM00278">
    <property type="entry name" value="HhH1"/>
    <property type="match status" value="2"/>
</dbReference>
<dbReference type="SUPFAM" id="SSF46600">
    <property type="entry name" value="C-terminal UvrC-binding domain of UvrB"/>
    <property type="match status" value="1"/>
</dbReference>
<dbReference type="SUPFAM" id="SSF82771">
    <property type="entry name" value="GIY-YIG endonuclease"/>
    <property type="match status" value="1"/>
</dbReference>
<dbReference type="SUPFAM" id="SSF47781">
    <property type="entry name" value="RuvA domain 2-like"/>
    <property type="match status" value="1"/>
</dbReference>
<dbReference type="PROSITE" id="PS50164">
    <property type="entry name" value="GIY_YIG"/>
    <property type="match status" value="1"/>
</dbReference>
<dbReference type="PROSITE" id="PS50151">
    <property type="entry name" value="UVR"/>
    <property type="match status" value="1"/>
</dbReference>
<dbReference type="PROSITE" id="PS50165">
    <property type="entry name" value="UVRC"/>
    <property type="match status" value="1"/>
</dbReference>
<keyword id="KW-0963">Cytoplasm</keyword>
<keyword id="KW-0227">DNA damage</keyword>
<keyword id="KW-0228">DNA excision</keyword>
<keyword id="KW-0234">DNA repair</keyword>
<keyword id="KW-0267">Excision nuclease</keyword>
<keyword id="KW-1185">Reference proteome</keyword>
<keyword id="KW-0742">SOS response</keyword>